<gene>
    <name type="ordered locus">YPN_3151</name>
    <name type="ORF">YP516_3578</name>
</gene>
<evidence type="ECO:0000255" key="1">
    <source>
        <dbReference type="HAMAP-Rule" id="MF_00686"/>
    </source>
</evidence>
<accession>Q1CEV2</accession>
<accession>C4GXJ7</accession>
<comment type="function">
    <text evidence="1">Could be a mediator in iron transactions between iron acquisition and iron-requiring processes, such as synthesis and/or repair of Fe-S clusters in biosynthetic enzymes.</text>
</comment>
<comment type="subunit">
    <text evidence="1">Monomer.</text>
</comment>
<comment type="similarity">
    <text evidence="1">Belongs to the Fe(2+)-trafficking protein family.</text>
</comment>
<proteinExistence type="inferred from homology"/>
<dbReference type="EMBL" id="CP000305">
    <property type="protein sequence ID" value="ABG19478.1"/>
    <property type="molecule type" value="Genomic_DNA"/>
</dbReference>
<dbReference type="EMBL" id="ACNQ01000017">
    <property type="protein sequence ID" value="EEO75647.1"/>
    <property type="molecule type" value="Genomic_DNA"/>
</dbReference>
<dbReference type="RefSeq" id="WP_002209994.1">
    <property type="nucleotide sequence ID" value="NZ_ACNQ01000017.1"/>
</dbReference>
<dbReference type="SMR" id="Q1CEV2"/>
<dbReference type="KEGG" id="ypn:YPN_3151"/>
<dbReference type="HOGENOM" id="CLU_170994_0_0_6"/>
<dbReference type="Proteomes" id="UP000008936">
    <property type="component" value="Chromosome"/>
</dbReference>
<dbReference type="GO" id="GO:0005829">
    <property type="term" value="C:cytosol"/>
    <property type="evidence" value="ECO:0007669"/>
    <property type="project" value="TreeGrafter"/>
</dbReference>
<dbReference type="GO" id="GO:0005506">
    <property type="term" value="F:iron ion binding"/>
    <property type="evidence" value="ECO:0007669"/>
    <property type="project" value="UniProtKB-UniRule"/>
</dbReference>
<dbReference type="GO" id="GO:0034599">
    <property type="term" value="P:cellular response to oxidative stress"/>
    <property type="evidence" value="ECO:0007669"/>
    <property type="project" value="TreeGrafter"/>
</dbReference>
<dbReference type="FunFam" id="1.10.3880.10:FF:000001">
    <property type="entry name" value="Probable Fe(2+)-trafficking protein"/>
    <property type="match status" value="1"/>
</dbReference>
<dbReference type="Gene3D" id="1.10.3880.10">
    <property type="entry name" value="Fe(II) trafficking protein YggX"/>
    <property type="match status" value="1"/>
</dbReference>
<dbReference type="HAMAP" id="MF_00686">
    <property type="entry name" value="Fe_traffic_YggX"/>
    <property type="match status" value="1"/>
</dbReference>
<dbReference type="InterPro" id="IPR007457">
    <property type="entry name" value="Fe_traffick_prot_YggX"/>
</dbReference>
<dbReference type="InterPro" id="IPR036766">
    <property type="entry name" value="Fe_traffick_prot_YggX_sf"/>
</dbReference>
<dbReference type="NCBIfam" id="NF003817">
    <property type="entry name" value="PRK05408.1"/>
    <property type="match status" value="1"/>
</dbReference>
<dbReference type="PANTHER" id="PTHR36965">
    <property type="entry name" value="FE(2+)-TRAFFICKING PROTEIN-RELATED"/>
    <property type="match status" value="1"/>
</dbReference>
<dbReference type="PANTHER" id="PTHR36965:SF1">
    <property type="entry name" value="FE(2+)-TRAFFICKING PROTEIN-RELATED"/>
    <property type="match status" value="1"/>
</dbReference>
<dbReference type="Pfam" id="PF04362">
    <property type="entry name" value="Iron_traffic"/>
    <property type="match status" value="1"/>
</dbReference>
<dbReference type="PIRSF" id="PIRSF029827">
    <property type="entry name" value="Fe_traffic_YggX"/>
    <property type="match status" value="1"/>
</dbReference>
<dbReference type="SUPFAM" id="SSF111148">
    <property type="entry name" value="YggX-like"/>
    <property type="match status" value="1"/>
</dbReference>
<sequence>MSRTIFCTFLKKDAERQDFQLYPGEIGKRIYNEISKEAWSQWITKQTMLINEKKLSMMNIEDRKLLEQEMVNFLFEGQDVHIAGYTPPSK</sequence>
<keyword id="KW-0408">Iron</keyword>
<organism>
    <name type="scientific">Yersinia pestis bv. Antiqua (strain Nepal516)</name>
    <dbReference type="NCBI Taxonomy" id="377628"/>
    <lineage>
        <taxon>Bacteria</taxon>
        <taxon>Pseudomonadati</taxon>
        <taxon>Pseudomonadota</taxon>
        <taxon>Gammaproteobacteria</taxon>
        <taxon>Enterobacterales</taxon>
        <taxon>Yersiniaceae</taxon>
        <taxon>Yersinia</taxon>
    </lineage>
</organism>
<protein>
    <recommendedName>
        <fullName evidence="1">Probable Fe(2+)-trafficking protein</fullName>
    </recommendedName>
</protein>
<feature type="chain" id="PRO_1000045076" description="Probable Fe(2+)-trafficking protein">
    <location>
        <begin position="1"/>
        <end position="90"/>
    </location>
</feature>
<reference key="1">
    <citation type="journal article" date="2006" name="J. Bacteriol.">
        <title>Complete genome sequence of Yersinia pestis strains Antiqua and Nepal516: evidence of gene reduction in an emerging pathogen.</title>
        <authorList>
            <person name="Chain P.S.G."/>
            <person name="Hu P."/>
            <person name="Malfatti S.A."/>
            <person name="Radnedge L."/>
            <person name="Larimer F."/>
            <person name="Vergez L.M."/>
            <person name="Worsham P."/>
            <person name="Chu M.C."/>
            <person name="Andersen G.L."/>
        </authorList>
    </citation>
    <scope>NUCLEOTIDE SEQUENCE [LARGE SCALE GENOMIC DNA]</scope>
    <source>
        <strain>Nepal516</strain>
    </source>
</reference>
<reference key="2">
    <citation type="submission" date="2009-04" db="EMBL/GenBank/DDBJ databases">
        <title>Yersinia pestis Nepal516A whole genome shotgun sequencing project.</title>
        <authorList>
            <person name="Plunkett G. III"/>
            <person name="Anderson B.D."/>
            <person name="Baumler D.J."/>
            <person name="Burland V."/>
            <person name="Cabot E.L."/>
            <person name="Glasner J.D."/>
            <person name="Mau B."/>
            <person name="Neeno-Eckwall E."/>
            <person name="Perna N.T."/>
            <person name="Munk A.C."/>
            <person name="Tapia R."/>
            <person name="Green L.D."/>
            <person name="Rogers Y.C."/>
            <person name="Detter J.C."/>
            <person name="Bruce D.C."/>
            <person name="Brettin T.S."/>
        </authorList>
    </citation>
    <scope>NUCLEOTIDE SEQUENCE [LARGE SCALE GENOMIC DNA]</scope>
    <source>
        <strain>Nepal516</strain>
    </source>
</reference>
<name>FETP_YERPN</name>